<feature type="chain" id="PRO_0000316659" description="Putative phosphoenolpyruvate synthase regulatory protein">
    <location>
        <begin position="1"/>
        <end position="277"/>
    </location>
</feature>
<feature type="binding site" evidence="1">
    <location>
        <begin position="157"/>
        <end position="164"/>
    </location>
    <ligand>
        <name>ADP</name>
        <dbReference type="ChEBI" id="CHEBI:456216"/>
    </ligand>
</feature>
<dbReference type="EC" id="2.7.11.33" evidence="1"/>
<dbReference type="EC" id="2.7.4.28" evidence="1"/>
<dbReference type="EMBL" id="CP000822">
    <property type="protein sequence ID" value="ABV12856.1"/>
    <property type="molecule type" value="Genomic_DNA"/>
</dbReference>
<dbReference type="SMR" id="A8AH93"/>
<dbReference type="STRING" id="290338.CKO_01727"/>
<dbReference type="GeneID" id="45135755"/>
<dbReference type="KEGG" id="cko:CKO_01727"/>
<dbReference type="HOGENOM" id="CLU_046206_1_0_6"/>
<dbReference type="OrthoDB" id="9782201at2"/>
<dbReference type="Proteomes" id="UP000008148">
    <property type="component" value="Chromosome"/>
</dbReference>
<dbReference type="GO" id="GO:0043531">
    <property type="term" value="F:ADP binding"/>
    <property type="evidence" value="ECO:0007669"/>
    <property type="project" value="UniProtKB-UniRule"/>
</dbReference>
<dbReference type="GO" id="GO:0005524">
    <property type="term" value="F:ATP binding"/>
    <property type="evidence" value="ECO:0007669"/>
    <property type="project" value="InterPro"/>
</dbReference>
<dbReference type="GO" id="GO:0016776">
    <property type="term" value="F:phosphotransferase activity, phosphate group as acceptor"/>
    <property type="evidence" value="ECO:0007669"/>
    <property type="project" value="UniProtKB-UniRule"/>
</dbReference>
<dbReference type="GO" id="GO:0004674">
    <property type="term" value="F:protein serine/threonine kinase activity"/>
    <property type="evidence" value="ECO:0007669"/>
    <property type="project" value="UniProtKB-UniRule"/>
</dbReference>
<dbReference type="HAMAP" id="MF_01062">
    <property type="entry name" value="PSRP"/>
    <property type="match status" value="1"/>
</dbReference>
<dbReference type="InterPro" id="IPR005177">
    <property type="entry name" value="Kinase-pyrophosphorylase"/>
</dbReference>
<dbReference type="InterPro" id="IPR026530">
    <property type="entry name" value="PSRP"/>
</dbReference>
<dbReference type="NCBIfam" id="NF003742">
    <property type="entry name" value="PRK05339.1"/>
    <property type="match status" value="1"/>
</dbReference>
<dbReference type="PANTHER" id="PTHR31756">
    <property type="entry name" value="PYRUVATE, PHOSPHATE DIKINASE REGULATORY PROTEIN 1, CHLOROPLASTIC"/>
    <property type="match status" value="1"/>
</dbReference>
<dbReference type="PANTHER" id="PTHR31756:SF3">
    <property type="entry name" value="PYRUVATE, PHOSPHATE DIKINASE REGULATORY PROTEIN 1, CHLOROPLASTIC"/>
    <property type="match status" value="1"/>
</dbReference>
<dbReference type="Pfam" id="PF03618">
    <property type="entry name" value="Kinase-PPPase"/>
    <property type="match status" value="1"/>
</dbReference>
<keyword id="KW-0418">Kinase</keyword>
<keyword id="KW-0547">Nucleotide-binding</keyword>
<keyword id="KW-1185">Reference proteome</keyword>
<keyword id="KW-0723">Serine/threonine-protein kinase</keyword>
<keyword id="KW-0808">Transferase</keyword>
<accession>A8AH93</accession>
<reference key="1">
    <citation type="submission" date="2007-08" db="EMBL/GenBank/DDBJ databases">
        <authorList>
            <consortium name="The Citrobacter koseri Genome Sequencing Project"/>
            <person name="McClelland M."/>
            <person name="Sanderson E.K."/>
            <person name="Porwollik S."/>
            <person name="Spieth J."/>
            <person name="Clifton W.S."/>
            <person name="Latreille P."/>
            <person name="Courtney L."/>
            <person name="Wang C."/>
            <person name="Pepin K."/>
            <person name="Bhonagiri V."/>
            <person name="Nash W."/>
            <person name="Johnson M."/>
            <person name="Thiruvilangam P."/>
            <person name="Wilson R."/>
        </authorList>
    </citation>
    <scope>NUCLEOTIDE SEQUENCE [LARGE SCALE GENOMIC DNA]</scope>
    <source>
        <strain>ATCC BAA-895 / CDC 4225-83 / SGSC4696</strain>
    </source>
</reference>
<organism>
    <name type="scientific">Citrobacter koseri (strain ATCC BAA-895 / CDC 4225-83 / SGSC4696)</name>
    <dbReference type="NCBI Taxonomy" id="290338"/>
    <lineage>
        <taxon>Bacteria</taxon>
        <taxon>Pseudomonadati</taxon>
        <taxon>Pseudomonadota</taxon>
        <taxon>Gammaproteobacteria</taxon>
        <taxon>Enterobacterales</taxon>
        <taxon>Enterobacteriaceae</taxon>
        <taxon>Citrobacter</taxon>
    </lineage>
</organism>
<comment type="function">
    <text evidence="1">Bifunctional serine/threonine kinase and phosphorylase involved in the regulation of the phosphoenolpyruvate synthase (PEPS) by catalyzing its phosphorylation/dephosphorylation.</text>
</comment>
<comment type="catalytic activity">
    <reaction evidence="1">
        <text>[pyruvate, water dikinase] + ADP = [pyruvate, water dikinase]-phosphate + AMP + H(+)</text>
        <dbReference type="Rhea" id="RHEA:46020"/>
        <dbReference type="Rhea" id="RHEA-COMP:11425"/>
        <dbReference type="Rhea" id="RHEA-COMP:11426"/>
        <dbReference type="ChEBI" id="CHEBI:15378"/>
        <dbReference type="ChEBI" id="CHEBI:43176"/>
        <dbReference type="ChEBI" id="CHEBI:68546"/>
        <dbReference type="ChEBI" id="CHEBI:456215"/>
        <dbReference type="ChEBI" id="CHEBI:456216"/>
        <dbReference type="EC" id="2.7.11.33"/>
    </reaction>
</comment>
<comment type="catalytic activity">
    <reaction evidence="1">
        <text>[pyruvate, water dikinase]-phosphate + phosphate + H(+) = [pyruvate, water dikinase] + diphosphate</text>
        <dbReference type="Rhea" id="RHEA:48580"/>
        <dbReference type="Rhea" id="RHEA-COMP:11425"/>
        <dbReference type="Rhea" id="RHEA-COMP:11426"/>
        <dbReference type="ChEBI" id="CHEBI:15378"/>
        <dbReference type="ChEBI" id="CHEBI:33019"/>
        <dbReference type="ChEBI" id="CHEBI:43176"/>
        <dbReference type="ChEBI" id="CHEBI:43474"/>
        <dbReference type="ChEBI" id="CHEBI:68546"/>
        <dbReference type="EC" id="2.7.4.28"/>
    </reaction>
</comment>
<comment type="similarity">
    <text evidence="1">Belongs to the pyruvate, phosphate/water dikinase regulatory protein family. PSRP subfamily.</text>
</comment>
<gene>
    <name type="ordered locus">CKO_01727</name>
</gene>
<protein>
    <recommendedName>
        <fullName evidence="1">Putative phosphoenolpyruvate synthase regulatory protein</fullName>
        <shortName evidence="1">PEP synthase regulatory protein</shortName>
        <shortName evidence="1">PSRP</shortName>
        <ecNumber evidence="1">2.7.11.33</ecNumber>
        <ecNumber evidence="1">2.7.4.28</ecNumber>
    </recommendedName>
    <alternativeName>
        <fullName evidence="1">Pyruvate, water dikinase regulatory protein</fullName>
    </alternativeName>
</protein>
<sequence>MDNVVDRHVFYISDGTAITAEVLGHAVMSQFPVTISSITLPFVENESRARAVKDQIDAIYQQTGVRPLVFYSIVLPEIRAIILQSEGFCQDIVQALVAPLQQEMKLDPTPIAHRTHGLNPGNLNKYDARIAAIDYTLAHDDGISLRNLDQAQVILLGVSRCGKTPTSLYLAMQFGIRAANYPFIADDMDNLVLPTSLKPLQHKLFGLTIDPERLAAIREERRENSRYASLRQCRMEVAEVEALYRKNQIPCLNSTNYSVEEIATKILDIMGLNRRMY</sequence>
<evidence type="ECO:0000255" key="1">
    <source>
        <dbReference type="HAMAP-Rule" id="MF_01062"/>
    </source>
</evidence>
<name>PSRP_CITK8</name>
<proteinExistence type="inferred from homology"/>